<keyword id="KW-0413">Isomerase</keyword>
<keyword id="KW-0819">tRNA processing</keyword>
<sequence length="412" mass="46498">MIEAPPFDKSLGMLYYVTDTCPAGGVIKARPEDFIVEEVLKDGTVVALTGISLKPRVGSWTWIHVVKKNTDTLKLLLYLAKTLGLKARDISIGGIKDTRAVTSQIISIRGDVTNLPKIRNVEFLSFWPMDKPITPSLIYGNRFTITLRNVEKVDCAEATLKTLQYIALPNYYGYQRFGTIRPVSHLLGKALVKKDAEEFFDIMFCKIFAYESDVAKKAREAACKGDYRRALEIFPKRFIEERAVLRGLLRGLDLWNAIMSIPIQILRIYVEALQSYLFNLFLSKRMELGPLNRPIEGDLVEINGQVVHYAEGLGGEVVLPTVGVGVKMPRGKVGEAVLQLLKREGVEPSMFLKMPRGLRVYGGYRKVVLTLRDFRYAVDKEVTVSFTLPRGSYATVILREVVKPEEPYRHGF</sequence>
<comment type="function">
    <text evidence="1">Could be responsible for synthesis of pseudouridine from uracil-13 in transfer RNAs.</text>
</comment>
<comment type="catalytic activity">
    <reaction evidence="1">
        <text>uridine(13) in tRNA = pseudouridine(13) in tRNA</text>
        <dbReference type="Rhea" id="RHEA:42540"/>
        <dbReference type="Rhea" id="RHEA-COMP:10105"/>
        <dbReference type="Rhea" id="RHEA-COMP:10106"/>
        <dbReference type="ChEBI" id="CHEBI:65314"/>
        <dbReference type="ChEBI" id="CHEBI:65315"/>
        <dbReference type="EC" id="5.4.99.27"/>
    </reaction>
</comment>
<comment type="similarity">
    <text evidence="1">Belongs to the pseudouridine synthase TruD family.</text>
</comment>
<proteinExistence type="inferred from homology"/>
<evidence type="ECO:0000255" key="1">
    <source>
        <dbReference type="HAMAP-Rule" id="MF_01082"/>
    </source>
</evidence>
<gene>
    <name evidence="1" type="primary">truD</name>
    <name type="ordered locus">Pisl_0511</name>
</gene>
<protein>
    <recommendedName>
        <fullName evidence="1">Probable tRNA pseudouridine synthase D</fullName>
        <ecNumber evidence="1">5.4.99.27</ecNumber>
    </recommendedName>
    <alternativeName>
        <fullName evidence="1">tRNA pseudouridine(13) synthase</fullName>
    </alternativeName>
    <alternativeName>
        <fullName evidence="1">tRNA pseudouridylate synthase D</fullName>
    </alternativeName>
    <alternativeName>
        <fullName evidence="1">tRNA-uridine isomerase D</fullName>
    </alternativeName>
</protein>
<feature type="chain" id="PRO_1000084762" description="Probable tRNA pseudouridine synthase D">
    <location>
        <begin position="1"/>
        <end position="412"/>
    </location>
</feature>
<feature type="domain" description="TRUD" evidence="1">
    <location>
        <begin position="167"/>
        <end position="370"/>
    </location>
</feature>
<feature type="active site" description="Nucleophile" evidence="1">
    <location>
        <position position="97"/>
    </location>
</feature>
<dbReference type="EC" id="5.4.99.27" evidence="1"/>
<dbReference type="EMBL" id="CP000504">
    <property type="protein sequence ID" value="ABL87689.1"/>
    <property type="molecule type" value="Genomic_DNA"/>
</dbReference>
<dbReference type="RefSeq" id="WP_011762266.1">
    <property type="nucleotide sequence ID" value="NC_008701.1"/>
</dbReference>
<dbReference type="SMR" id="A1RRV7"/>
<dbReference type="STRING" id="384616.Pisl_0511"/>
<dbReference type="GeneID" id="4618155"/>
<dbReference type="KEGG" id="pis:Pisl_0511"/>
<dbReference type="eggNOG" id="arCOG04252">
    <property type="taxonomic scope" value="Archaea"/>
</dbReference>
<dbReference type="HOGENOM" id="CLU_005281_4_1_2"/>
<dbReference type="OrthoDB" id="1798at2157"/>
<dbReference type="Proteomes" id="UP000002595">
    <property type="component" value="Chromosome"/>
</dbReference>
<dbReference type="GO" id="GO:0003723">
    <property type="term" value="F:RNA binding"/>
    <property type="evidence" value="ECO:0007669"/>
    <property type="project" value="InterPro"/>
</dbReference>
<dbReference type="GO" id="GO:0160150">
    <property type="term" value="F:tRNA pseudouridine(13) synthase activity"/>
    <property type="evidence" value="ECO:0007669"/>
    <property type="project" value="UniProtKB-EC"/>
</dbReference>
<dbReference type="GO" id="GO:0031119">
    <property type="term" value="P:tRNA pseudouridine synthesis"/>
    <property type="evidence" value="ECO:0007669"/>
    <property type="project" value="UniProtKB-UniRule"/>
</dbReference>
<dbReference type="CDD" id="cd02576">
    <property type="entry name" value="PseudoU_synth_ScPUS7"/>
    <property type="match status" value="1"/>
</dbReference>
<dbReference type="Gene3D" id="1.10.1510.30">
    <property type="match status" value="1"/>
</dbReference>
<dbReference type="Gene3D" id="3.30.70.3160">
    <property type="match status" value="1"/>
</dbReference>
<dbReference type="Gene3D" id="3.30.2350.20">
    <property type="entry name" value="TruD, catalytic domain"/>
    <property type="match status" value="1"/>
</dbReference>
<dbReference type="HAMAP" id="MF_01082">
    <property type="entry name" value="TruD"/>
    <property type="match status" value="1"/>
</dbReference>
<dbReference type="InterPro" id="IPR020103">
    <property type="entry name" value="PsdUridine_synth_cat_dom_sf"/>
</dbReference>
<dbReference type="InterPro" id="IPR001656">
    <property type="entry name" value="PsdUridine_synth_TruD"/>
</dbReference>
<dbReference type="InterPro" id="IPR020119">
    <property type="entry name" value="PsdUridine_synth_TruD_CS"/>
</dbReference>
<dbReference type="InterPro" id="IPR011760">
    <property type="entry name" value="PsdUridine_synth_TruD_insert"/>
</dbReference>
<dbReference type="InterPro" id="IPR042214">
    <property type="entry name" value="TruD_catalytic"/>
</dbReference>
<dbReference type="NCBIfam" id="TIGR00094">
    <property type="entry name" value="tRNA_TruD_broad"/>
    <property type="match status" value="1"/>
</dbReference>
<dbReference type="PANTHER" id="PTHR13326:SF21">
    <property type="entry name" value="PSEUDOURIDYLATE SYNTHASE PUS7L"/>
    <property type="match status" value="1"/>
</dbReference>
<dbReference type="PANTHER" id="PTHR13326">
    <property type="entry name" value="TRNA PSEUDOURIDINE SYNTHASE D"/>
    <property type="match status" value="1"/>
</dbReference>
<dbReference type="Pfam" id="PF01142">
    <property type="entry name" value="TruD"/>
    <property type="match status" value="1"/>
</dbReference>
<dbReference type="PIRSF" id="PIRSF037016">
    <property type="entry name" value="Pseudouridin_synth_euk_prd"/>
    <property type="match status" value="1"/>
</dbReference>
<dbReference type="SUPFAM" id="SSF55120">
    <property type="entry name" value="Pseudouridine synthase"/>
    <property type="match status" value="1"/>
</dbReference>
<dbReference type="PROSITE" id="PS50984">
    <property type="entry name" value="TRUD"/>
    <property type="match status" value="1"/>
</dbReference>
<dbReference type="PROSITE" id="PS01268">
    <property type="entry name" value="UPF0024"/>
    <property type="match status" value="1"/>
</dbReference>
<name>TRUD_PYRIL</name>
<organism>
    <name type="scientific">Pyrobaculum islandicum (strain DSM 4184 / JCM 9189 / GEO3)</name>
    <dbReference type="NCBI Taxonomy" id="384616"/>
    <lineage>
        <taxon>Archaea</taxon>
        <taxon>Thermoproteota</taxon>
        <taxon>Thermoprotei</taxon>
        <taxon>Thermoproteales</taxon>
        <taxon>Thermoproteaceae</taxon>
        <taxon>Pyrobaculum</taxon>
    </lineage>
</organism>
<reference key="1">
    <citation type="submission" date="2006-12" db="EMBL/GenBank/DDBJ databases">
        <title>Complete sequence of Pyrobaculum islandicum DSM 4184.</title>
        <authorList>
            <person name="Copeland A."/>
            <person name="Lucas S."/>
            <person name="Lapidus A."/>
            <person name="Barry K."/>
            <person name="Detter J.C."/>
            <person name="Glavina del Rio T."/>
            <person name="Dalin E."/>
            <person name="Tice H."/>
            <person name="Pitluck S."/>
            <person name="Meincke L."/>
            <person name="Brettin T."/>
            <person name="Bruce D."/>
            <person name="Han C."/>
            <person name="Tapia R."/>
            <person name="Gilna P."/>
            <person name="Schmutz J."/>
            <person name="Larimer F."/>
            <person name="Land M."/>
            <person name="Hauser L."/>
            <person name="Kyrpides N."/>
            <person name="Mikhailova N."/>
            <person name="Cozen A.E."/>
            <person name="Fitz-Gibbon S.T."/>
            <person name="House C.H."/>
            <person name="Saltikov C."/>
            <person name="Lowe T."/>
            <person name="Richardson P."/>
        </authorList>
    </citation>
    <scope>NUCLEOTIDE SEQUENCE [LARGE SCALE GENOMIC DNA]</scope>
    <source>
        <strain>DSM 4184 / JCM 9189 / GEO3</strain>
    </source>
</reference>
<accession>A1RRV7</accession>